<keyword id="KW-0028">Amino-acid biosynthesis</keyword>
<keyword id="KW-0055">Arginine biosynthesis</keyword>
<keyword id="KW-0170">Cobalt</keyword>
<keyword id="KW-0963">Cytoplasm</keyword>
<keyword id="KW-0378">Hydrolase</keyword>
<keyword id="KW-0479">Metal-binding</keyword>
<keyword id="KW-0862">Zinc</keyword>
<proteinExistence type="inferred from homology"/>
<feature type="chain" id="PRO_1000084831" description="Acetylornithine deacetylase">
    <location>
        <begin position="1"/>
        <end position="383"/>
    </location>
</feature>
<feature type="active site" evidence="1">
    <location>
        <position position="82"/>
    </location>
</feature>
<feature type="active site" evidence="1">
    <location>
        <position position="144"/>
    </location>
</feature>
<feature type="binding site" evidence="1">
    <location>
        <position position="80"/>
    </location>
    <ligand>
        <name>Zn(2+)</name>
        <dbReference type="ChEBI" id="CHEBI:29105"/>
        <label>1</label>
    </ligand>
</feature>
<feature type="binding site" evidence="1">
    <location>
        <position position="112"/>
    </location>
    <ligand>
        <name>Zn(2+)</name>
        <dbReference type="ChEBI" id="CHEBI:29105"/>
        <label>1</label>
    </ligand>
</feature>
<feature type="binding site" evidence="1">
    <location>
        <position position="112"/>
    </location>
    <ligand>
        <name>Zn(2+)</name>
        <dbReference type="ChEBI" id="CHEBI:29105"/>
        <label>2</label>
    </ligand>
</feature>
<feature type="binding site" evidence="1">
    <location>
        <position position="145"/>
    </location>
    <ligand>
        <name>Zn(2+)</name>
        <dbReference type="ChEBI" id="CHEBI:29105"/>
        <label>2</label>
    </ligand>
</feature>
<feature type="binding site" evidence="1">
    <location>
        <position position="169"/>
    </location>
    <ligand>
        <name>Zn(2+)</name>
        <dbReference type="ChEBI" id="CHEBI:29105"/>
        <label>1</label>
    </ligand>
</feature>
<feature type="binding site" evidence="1">
    <location>
        <position position="355"/>
    </location>
    <ligand>
        <name>Zn(2+)</name>
        <dbReference type="ChEBI" id="CHEBI:29105"/>
        <label>2</label>
    </ligand>
</feature>
<evidence type="ECO:0000255" key="1">
    <source>
        <dbReference type="HAMAP-Rule" id="MF_01108"/>
    </source>
</evidence>
<gene>
    <name evidence="1" type="primary">argE</name>
    <name type="ordered locus">SPAB_05105</name>
</gene>
<dbReference type="EC" id="3.5.1.16" evidence="1"/>
<dbReference type="EMBL" id="CP000886">
    <property type="protein sequence ID" value="ABX70396.1"/>
    <property type="molecule type" value="Genomic_DNA"/>
</dbReference>
<dbReference type="RefSeq" id="WP_000800208.1">
    <property type="nucleotide sequence ID" value="NC_010102.1"/>
</dbReference>
<dbReference type="SMR" id="A9N0G7"/>
<dbReference type="MEROPS" id="M20.974"/>
<dbReference type="KEGG" id="spq:SPAB_05105"/>
<dbReference type="PATRIC" id="fig|1016998.12.peg.4791"/>
<dbReference type="HOGENOM" id="CLU_021802_2_4_6"/>
<dbReference type="BioCyc" id="SENT1016998:SPAB_RS20770-MONOMER"/>
<dbReference type="UniPathway" id="UPA00068">
    <property type="reaction ID" value="UER00110"/>
</dbReference>
<dbReference type="Proteomes" id="UP000008556">
    <property type="component" value="Chromosome"/>
</dbReference>
<dbReference type="GO" id="GO:0005737">
    <property type="term" value="C:cytoplasm"/>
    <property type="evidence" value="ECO:0007669"/>
    <property type="project" value="UniProtKB-SubCell"/>
</dbReference>
<dbReference type="GO" id="GO:0008777">
    <property type="term" value="F:acetylornithine deacetylase activity"/>
    <property type="evidence" value="ECO:0007669"/>
    <property type="project" value="UniProtKB-UniRule"/>
</dbReference>
<dbReference type="GO" id="GO:0008270">
    <property type="term" value="F:zinc ion binding"/>
    <property type="evidence" value="ECO:0007669"/>
    <property type="project" value="UniProtKB-UniRule"/>
</dbReference>
<dbReference type="GO" id="GO:0006526">
    <property type="term" value="P:L-arginine biosynthetic process"/>
    <property type="evidence" value="ECO:0007669"/>
    <property type="project" value="UniProtKB-UniRule"/>
</dbReference>
<dbReference type="CDD" id="cd03894">
    <property type="entry name" value="M20_ArgE"/>
    <property type="match status" value="1"/>
</dbReference>
<dbReference type="FunFam" id="3.30.70.360:FF:000003">
    <property type="entry name" value="Acetylornithine deacetylase"/>
    <property type="match status" value="1"/>
</dbReference>
<dbReference type="Gene3D" id="3.30.70.360">
    <property type="match status" value="1"/>
</dbReference>
<dbReference type="Gene3D" id="3.40.630.10">
    <property type="entry name" value="Zn peptidases"/>
    <property type="match status" value="1"/>
</dbReference>
<dbReference type="HAMAP" id="MF_01108">
    <property type="entry name" value="ArgE"/>
    <property type="match status" value="1"/>
</dbReference>
<dbReference type="InterPro" id="IPR010169">
    <property type="entry name" value="AcOrn-deacetyl"/>
</dbReference>
<dbReference type="InterPro" id="IPR001261">
    <property type="entry name" value="ArgE/DapE_CS"/>
</dbReference>
<dbReference type="InterPro" id="IPR036264">
    <property type="entry name" value="Bact_exopeptidase_dim_dom"/>
</dbReference>
<dbReference type="InterPro" id="IPR002933">
    <property type="entry name" value="Peptidase_M20"/>
</dbReference>
<dbReference type="InterPro" id="IPR011650">
    <property type="entry name" value="Peptidase_M20_dimer"/>
</dbReference>
<dbReference type="InterPro" id="IPR050072">
    <property type="entry name" value="Peptidase_M20A"/>
</dbReference>
<dbReference type="NCBIfam" id="TIGR01892">
    <property type="entry name" value="AcOrn-deacetyl"/>
    <property type="match status" value="1"/>
</dbReference>
<dbReference type="NCBIfam" id="NF003474">
    <property type="entry name" value="PRK05111.1"/>
    <property type="match status" value="1"/>
</dbReference>
<dbReference type="PANTHER" id="PTHR43808">
    <property type="entry name" value="ACETYLORNITHINE DEACETYLASE"/>
    <property type="match status" value="1"/>
</dbReference>
<dbReference type="PANTHER" id="PTHR43808:SF1">
    <property type="entry name" value="ACETYLORNITHINE DEACETYLASE"/>
    <property type="match status" value="1"/>
</dbReference>
<dbReference type="Pfam" id="PF07687">
    <property type="entry name" value="M20_dimer"/>
    <property type="match status" value="1"/>
</dbReference>
<dbReference type="Pfam" id="PF01546">
    <property type="entry name" value="Peptidase_M20"/>
    <property type="match status" value="1"/>
</dbReference>
<dbReference type="SUPFAM" id="SSF55031">
    <property type="entry name" value="Bacterial exopeptidase dimerisation domain"/>
    <property type="match status" value="1"/>
</dbReference>
<dbReference type="SUPFAM" id="SSF53187">
    <property type="entry name" value="Zn-dependent exopeptidases"/>
    <property type="match status" value="1"/>
</dbReference>
<dbReference type="PROSITE" id="PS00758">
    <property type="entry name" value="ARGE_DAPE_CPG2_1"/>
    <property type="match status" value="1"/>
</dbReference>
<dbReference type="PROSITE" id="PS00759">
    <property type="entry name" value="ARGE_DAPE_CPG2_2"/>
    <property type="match status" value="1"/>
</dbReference>
<comment type="function">
    <text evidence="1">Catalyzes the hydrolysis of the amide bond of N(2)-acetylated L-amino acids. Cleaves the acetyl group from N-acetyl-L-ornithine to form L-ornithine, an intermediate in L-arginine biosynthesis pathway, and a branchpoint in the synthesis of polyamines.</text>
</comment>
<comment type="catalytic activity">
    <reaction evidence="1">
        <text>N(2)-acetyl-L-ornithine + H2O = L-ornithine + acetate</text>
        <dbReference type="Rhea" id="RHEA:15941"/>
        <dbReference type="ChEBI" id="CHEBI:15377"/>
        <dbReference type="ChEBI" id="CHEBI:30089"/>
        <dbReference type="ChEBI" id="CHEBI:46911"/>
        <dbReference type="ChEBI" id="CHEBI:57805"/>
        <dbReference type="EC" id="3.5.1.16"/>
    </reaction>
</comment>
<comment type="cofactor">
    <cofactor evidence="1">
        <name>Zn(2+)</name>
        <dbReference type="ChEBI" id="CHEBI:29105"/>
    </cofactor>
    <cofactor evidence="1">
        <name>Co(2+)</name>
        <dbReference type="ChEBI" id="CHEBI:48828"/>
    </cofactor>
    <text evidence="1">Binds 2 Zn(2+) or Co(2+) ions per subunit.</text>
</comment>
<comment type="cofactor">
    <cofactor evidence="1">
        <name>glutathione</name>
        <dbReference type="ChEBI" id="CHEBI:57925"/>
    </cofactor>
</comment>
<comment type="pathway">
    <text evidence="1">Amino-acid biosynthesis; L-arginine biosynthesis; L-ornithine from N(2)-acetyl-L-ornithine (linear): step 1/1.</text>
</comment>
<comment type="subunit">
    <text evidence="1">Homodimer.</text>
</comment>
<comment type="subcellular location">
    <subcellularLocation>
        <location evidence="1">Cytoplasm</location>
    </subcellularLocation>
</comment>
<comment type="similarity">
    <text evidence="1">Belongs to the peptidase M20A family. ArgE subfamily.</text>
</comment>
<sequence>MKNVLPPFIEIYRALIATPSISATEESLDQSNASLITLLAGWFSDLGFNVEVQPVPGTRNKFNMLASTGHGAGGLLLTGHTDTVPFDDGRWTRDPFTLTEHDNKLYGLGTADMKGFFAFILDALRDVDVTKLKKPLYILATADEETSMAGARYFSETTALRPDCAIIGEPTSLQPIRAHKGHISNVVRVLGQSGHSSDPARGVNAIELMHDAIGHIMQLRDSLKARYHYEAFTVPYPTLNLGHIHGGDASNRICACCELHMDIRPLPGMTLNDLNGLLNDALAPVSERWPGRLTVAELHPPIPGYECPPDHQLVEVVEKLLGTKTDVVNYCTEAPFMQTLCPTLVLGPGSINQAHQPDEYLETRFIKPTRELITQVVHHFCWH</sequence>
<organism>
    <name type="scientific">Salmonella paratyphi B (strain ATCC BAA-1250 / SPB7)</name>
    <dbReference type="NCBI Taxonomy" id="1016998"/>
    <lineage>
        <taxon>Bacteria</taxon>
        <taxon>Pseudomonadati</taxon>
        <taxon>Pseudomonadota</taxon>
        <taxon>Gammaproteobacteria</taxon>
        <taxon>Enterobacterales</taxon>
        <taxon>Enterobacteriaceae</taxon>
        <taxon>Salmonella</taxon>
    </lineage>
</organism>
<accession>A9N0G7</accession>
<protein>
    <recommendedName>
        <fullName evidence="1">Acetylornithine deacetylase</fullName>
        <shortName evidence="1">AO</shortName>
        <shortName evidence="1">Acetylornithinase</shortName>
        <ecNumber evidence="1">3.5.1.16</ecNumber>
    </recommendedName>
    <alternativeName>
        <fullName evidence="1">N-acetylornithinase</fullName>
        <shortName evidence="1">NAO</shortName>
    </alternativeName>
</protein>
<reference key="1">
    <citation type="submission" date="2007-11" db="EMBL/GenBank/DDBJ databases">
        <authorList>
            <consortium name="The Salmonella enterica serovar Paratyphi B Genome Sequencing Project"/>
            <person name="McClelland M."/>
            <person name="Sanderson E.K."/>
            <person name="Porwollik S."/>
            <person name="Spieth J."/>
            <person name="Clifton W.S."/>
            <person name="Fulton R."/>
            <person name="Cordes M."/>
            <person name="Wollam A."/>
            <person name="Shah N."/>
            <person name="Pepin K."/>
            <person name="Bhonagiri V."/>
            <person name="Nash W."/>
            <person name="Johnson M."/>
            <person name="Thiruvilangam P."/>
            <person name="Wilson R."/>
        </authorList>
    </citation>
    <scope>NUCLEOTIDE SEQUENCE [LARGE SCALE GENOMIC DNA]</scope>
    <source>
        <strain>ATCC BAA-1250 / SPB7</strain>
    </source>
</reference>
<name>ARGE_SALPB</name>